<sequence length="265" mass="27722">MSRIQKTFAALAAQNKKGLIPFITAGDPEPGLTVDLMHALVAGGADVIELGVPFSDPMADGPVIQRASERALANGVSLTQVLQWVREFRQTNADTPVVLMGYANPIERMGEAAFAKAAGAAGVDGVLVVDYPPEECESFAVLMRDNGIDPIFLLAPTSTDARIEAVGKVASGYVYYVSLKGVTGSATLDLDSVAARLPLIKKHVNLPVGVGFGIRDAQTARAIGSVADAVVIGSRLVQLLEDAPRGQAVESLRAFIAGIREALDA</sequence>
<comment type="function">
    <text evidence="1">The alpha subunit is responsible for the aldol cleavage of indoleglycerol phosphate to indole and glyceraldehyde 3-phosphate.</text>
</comment>
<comment type="catalytic activity">
    <reaction evidence="1">
        <text>(1S,2R)-1-C-(indol-3-yl)glycerol 3-phosphate + L-serine = D-glyceraldehyde 3-phosphate + L-tryptophan + H2O</text>
        <dbReference type="Rhea" id="RHEA:10532"/>
        <dbReference type="ChEBI" id="CHEBI:15377"/>
        <dbReference type="ChEBI" id="CHEBI:33384"/>
        <dbReference type="ChEBI" id="CHEBI:57912"/>
        <dbReference type="ChEBI" id="CHEBI:58866"/>
        <dbReference type="ChEBI" id="CHEBI:59776"/>
        <dbReference type="EC" id="4.2.1.20"/>
    </reaction>
</comment>
<comment type="pathway">
    <text evidence="1">Amino-acid biosynthesis; L-tryptophan biosynthesis; L-tryptophan from chorismate: step 5/5.</text>
</comment>
<comment type="subunit">
    <text evidence="1">Tetramer of two alpha and two beta chains.</text>
</comment>
<comment type="similarity">
    <text evidence="1">Belongs to the TrpA family.</text>
</comment>
<organism>
    <name type="scientific">Cupriavidus pinatubonensis (strain JMP 134 / LMG 1197)</name>
    <name type="common">Cupriavidus necator (strain JMP 134)</name>
    <dbReference type="NCBI Taxonomy" id="264198"/>
    <lineage>
        <taxon>Bacteria</taxon>
        <taxon>Pseudomonadati</taxon>
        <taxon>Pseudomonadota</taxon>
        <taxon>Betaproteobacteria</taxon>
        <taxon>Burkholderiales</taxon>
        <taxon>Burkholderiaceae</taxon>
        <taxon>Cupriavidus</taxon>
    </lineage>
</organism>
<accession>Q46YW7</accession>
<gene>
    <name evidence="1" type="primary">trpA</name>
    <name type="ordered locus">Reut_A2304</name>
</gene>
<keyword id="KW-0028">Amino-acid biosynthesis</keyword>
<keyword id="KW-0057">Aromatic amino acid biosynthesis</keyword>
<keyword id="KW-0456">Lyase</keyword>
<keyword id="KW-0822">Tryptophan biosynthesis</keyword>
<proteinExistence type="inferred from homology"/>
<protein>
    <recommendedName>
        <fullName evidence="1">Tryptophan synthase alpha chain</fullName>
        <ecNumber evidence="1">4.2.1.20</ecNumber>
    </recommendedName>
</protein>
<name>TRPA_CUPPJ</name>
<evidence type="ECO:0000255" key="1">
    <source>
        <dbReference type="HAMAP-Rule" id="MF_00131"/>
    </source>
</evidence>
<dbReference type="EC" id="4.2.1.20" evidence="1"/>
<dbReference type="EMBL" id="CP000090">
    <property type="protein sequence ID" value="AAZ61666.1"/>
    <property type="molecule type" value="Genomic_DNA"/>
</dbReference>
<dbReference type="SMR" id="Q46YW7"/>
<dbReference type="STRING" id="264198.Reut_A2304"/>
<dbReference type="KEGG" id="reu:Reut_A2304"/>
<dbReference type="eggNOG" id="COG0159">
    <property type="taxonomic scope" value="Bacteria"/>
</dbReference>
<dbReference type="HOGENOM" id="CLU_016734_0_0_4"/>
<dbReference type="OrthoDB" id="9804578at2"/>
<dbReference type="UniPathway" id="UPA00035">
    <property type="reaction ID" value="UER00044"/>
</dbReference>
<dbReference type="GO" id="GO:0005829">
    <property type="term" value="C:cytosol"/>
    <property type="evidence" value="ECO:0007669"/>
    <property type="project" value="TreeGrafter"/>
</dbReference>
<dbReference type="GO" id="GO:0004834">
    <property type="term" value="F:tryptophan synthase activity"/>
    <property type="evidence" value="ECO:0007669"/>
    <property type="project" value="UniProtKB-UniRule"/>
</dbReference>
<dbReference type="CDD" id="cd04724">
    <property type="entry name" value="Tryptophan_synthase_alpha"/>
    <property type="match status" value="1"/>
</dbReference>
<dbReference type="FunFam" id="3.20.20.70:FF:000037">
    <property type="entry name" value="Tryptophan synthase alpha chain"/>
    <property type="match status" value="1"/>
</dbReference>
<dbReference type="Gene3D" id="3.20.20.70">
    <property type="entry name" value="Aldolase class I"/>
    <property type="match status" value="1"/>
</dbReference>
<dbReference type="HAMAP" id="MF_00131">
    <property type="entry name" value="Trp_synth_alpha"/>
    <property type="match status" value="1"/>
</dbReference>
<dbReference type="InterPro" id="IPR013785">
    <property type="entry name" value="Aldolase_TIM"/>
</dbReference>
<dbReference type="InterPro" id="IPR011060">
    <property type="entry name" value="RibuloseP-bd_barrel"/>
</dbReference>
<dbReference type="InterPro" id="IPR018204">
    <property type="entry name" value="Trp_synthase_alpha_AS"/>
</dbReference>
<dbReference type="InterPro" id="IPR002028">
    <property type="entry name" value="Trp_synthase_suA"/>
</dbReference>
<dbReference type="NCBIfam" id="TIGR00262">
    <property type="entry name" value="trpA"/>
    <property type="match status" value="1"/>
</dbReference>
<dbReference type="PANTHER" id="PTHR43406:SF1">
    <property type="entry name" value="TRYPTOPHAN SYNTHASE ALPHA CHAIN, CHLOROPLASTIC"/>
    <property type="match status" value="1"/>
</dbReference>
<dbReference type="PANTHER" id="PTHR43406">
    <property type="entry name" value="TRYPTOPHAN SYNTHASE, ALPHA CHAIN"/>
    <property type="match status" value="1"/>
</dbReference>
<dbReference type="Pfam" id="PF00290">
    <property type="entry name" value="Trp_syntA"/>
    <property type="match status" value="1"/>
</dbReference>
<dbReference type="SUPFAM" id="SSF51366">
    <property type="entry name" value="Ribulose-phoshate binding barrel"/>
    <property type="match status" value="1"/>
</dbReference>
<dbReference type="PROSITE" id="PS00167">
    <property type="entry name" value="TRP_SYNTHASE_ALPHA"/>
    <property type="match status" value="1"/>
</dbReference>
<reference key="1">
    <citation type="journal article" date="2010" name="PLoS ONE">
        <title>The complete multipartite genome sequence of Cupriavidus necator JMP134, a versatile pollutant degrader.</title>
        <authorList>
            <person name="Lykidis A."/>
            <person name="Perez-Pantoja D."/>
            <person name="Ledger T."/>
            <person name="Mavromatis K."/>
            <person name="Anderson I.J."/>
            <person name="Ivanova N.N."/>
            <person name="Hooper S.D."/>
            <person name="Lapidus A."/>
            <person name="Lucas S."/>
            <person name="Gonzalez B."/>
            <person name="Kyrpides N.C."/>
        </authorList>
    </citation>
    <scope>NUCLEOTIDE SEQUENCE [LARGE SCALE GENOMIC DNA]</scope>
    <source>
        <strain>JMP134 / LMG 1197</strain>
    </source>
</reference>
<feature type="chain" id="PRO_1000018263" description="Tryptophan synthase alpha chain">
    <location>
        <begin position="1"/>
        <end position="265"/>
    </location>
</feature>
<feature type="active site" description="Proton acceptor" evidence="1">
    <location>
        <position position="49"/>
    </location>
</feature>
<feature type="active site" description="Proton acceptor" evidence="1">
    <location>
        <position position="60"/>
    </location>
</feature>